<proteinExistence type="inferred from homology"/>
<organism>
    <name type="scientific">Salmonella paratyphi A (strain ATCC 9150 / SARB42)</name>
    <dbReference type="NCBI Taxonomy" id="295319"/>
    <lineage>
        <taxon>Bacteria</taxon>
        <taxon>Pseudomonadati</taxon>
        <taxon>Pseudomonadota</taxon>
        <taxon>Gammaproteobacteria</taxon>
        <taxon>Enterobacterales</taxon>
        <taxon>Enterobacteriaceae</taxon>
        <taxon>Salmonella</taxon>
    </lineage>
</organism>
<reference key="1">
    <citation type="journal article" date="2004" name="Nat. Genet.">
        <title>Comparison of genome degradation in Paratyphi A and Typhi, human-restricted serovars of Salmonella enterica that cause typhoid.</title>
        <authorList>
            <person name="McClelland M."/>
            <person name="Sanderson K.E."/>
            <person name="Clifton S.W."/>
            <person name="Latreille P."/>
            <person name="Porwollik S."/>
            <person name="Sabo A."/>
            <person name="Meyer R."/>
            <person name="Bieri T."/>
            <person name="Ozersky P."/>
            <person name="McLellan M."/>
            <person name="Harkins C.R."/>
            <person name="Wang C."/>
            <person name="Nguyen C."/>
            <person name="Berghoff A."/>
            <person name="Elliott G."/>
            <person name="Kohlberg S."/>
            <person name="Strong C."/>
            <person name="Du F."/>
            <person name="Carter J."/>
            <person name="Kremizki C."/>
            <person name="Layman D."/>
            <person name="Leonard S."/>
            <person name="Sun H."/>
            <person name="Fulton L."/>
            <person name="Nash W."/>
            <person name="Miner T."/>
            <person name="Minx P."/>
            <person name="Delehaunty K."/>
            <person name="Fronick C."/>
            <person name="Magrini V."/>
            <person name="Nhan M."/>
            <person name="Warren W."/>
            <person name="Florea L."/>
            <person name="Spieth J."/>
            <person name="Wilson R.K."/>
        </authorList>
    </citation>
    <scope>NUCLEOTIDE SEQUENCE [LARGE SCALE GENOMIC DNA]</scope>
    <source>
        <strain>ATCC 9150 / SARB42</strain>
    </source>
</reference>
<comment type="function">
    <text evidence="1">Transcriptional repressor that controls expression of the genes required for the catabolism of sialic acids.</text>
</comment>
<comment type="similarity">
    <text evidence="1">Belongs to the NanR family.</text>
</comment>
<feature type="chain" id="PRO_0000301526" description="HTH-type transcriptional repressor NanR">
    <location>
        <begin position="1"/>
        <end position="263"/>
    </location>
</feature>
<feature type="domain" description="HTH gntR-type" evidence="1">
    <location>
        <begin position="30"/>
        <end position="98"/>
    </location>
</feature>
<feature type="DNA-binding region" description="H-T-H motif" evidence="1">
    <location>
        <begin position="58"/>
        <end position="77"/>
    </location>
</feature>
<feature type="region of interest" description="Disordered" evidence="2">
    <location>
        <begin position="1"/>
        <end position="25"/>
    </location>
</feature>
<accession>Q5PJS9</accession>
<name>NANR_SALPA</name>
<protein>
    <recommendedName>
        <fullName evidence="1">HTH-type transcriptional repressor NanR</fullName>
    </recommendedName>
</protein>
<evidence type="ECO:0000255" key="1">
    <source>
        <dbReference type="HAMAP-Rule" id="MF_01236"/>
    </source>
</evidence>
<evidence type="ECO:0000256" key="2">
    <source>
        <dbReference type="SAM" id="MobiDB-lite"/>
    </source>
</evidence>
<gene>
    <name evidence="1" type="primary">nanR</name>
    <name type="ordered locus">SPA3208</name>
</gene>
<dbReference type="EMBL" id="CP000026">
    <property type="protein sequence ID" value="AAV79032.1"/>
    <property type="molecule type" value="Genomic_DNA"/>
</dbReference>
<dbReference type="RefSeq" id="WP_000382926.1">
    <property type="nucleotide sequence ID" value="NC_006511.1"/>
</dbReference>
<dbReference type="SMR" id="Q5PJS9"/>
<dbReference type="KEGG" id="spt:SPA3208"/>
<dbReference type="HOGENOM" id="CLU_017584_9_1_6"/>
<dbReference type="Proteomes" id="UP000008185">
    <property type="component" value="Chromosome"/>
</dbReference>
<dbReference type="GO" id="GO:0003677">
    <property type="term" value="F:DNA binding"/>
    <property type="evidence" value="ECO:0007669"/>
    <property type="project" value="UniProtKB-KW"/>
</dbReference>
<dbReference type="GO" id="GO:0003700">
    <property type="term" value="F:DNA-binding transcription factor activity"/>
    <property type="evidence" value="ECO:0007669"/>
    <property type="project" value="UniProtKB-UniRule"/>
</dbReference>
<dbReference type="GO" id="GO:0045892">
    <property type="term" value="P:negative regulation of DNA-templated transcription"/>
    <property type="evidence" value="ECO:0007669"/>
    <property type="project" value="UniProtKB-UniRule"/>
</dbReference>
<dbReference type="CDD" id="cd07377">
    <property type="entry name" value="WHTH_GntR"/>
    <property type="match status" value="1"/>
</dbReference>
<dbReference type="FunFam" id="1.10.10.10:FF:000150">
    <property type="entry name" value="HTH-type transcriptional repressor NanR"/>
    <property type="match status" value="1"/>
</dbReference>
<dbReference type="Gene3D" id="1.20.120.530">
    <property type="entry name" value="GntR ligand-binding domain-like"/>
    <property type="match status" value="1"/>
</dbReference>
<dbReference type="Gene3D" id="1.10.10.10">
    <property type="entry name" value="Winged helix-like DNA-binding domain superfamily/Winged helix DNA-binding domain"/>
    <property type="match status" value="1"/>
</dbReference>
<dbReference type="HAMAP" id="MF_01236">
    <property type="entry name" value="HTH_NanR"/>
    <property type="match status" value="1"/>
</dbReference>
<dbReference type="InterPro" id="IPR011711">
    <property type="entry name" value="GntR_C"/>
</dbReference>
<dbReference type="InterPro" id="IPR008920">
    <property type="entry name" value="TF_FadR/GntR_C"/>
</dbReference>
<dbReference type="InterPro" id="IPR000524">
    <property type="entry name" value="Tscrpt_reg_HTH_GntR"/>
</dbReference>
<dbReference type="InterPro" id="IPR023730">
    <property type="entry name" value="Tscrpt_reg_NanR"/>
</dbReference>
<dbReference type="InterPro" id="IPR036388">
    <property type="entry name" value="WH-like_DNA-bd_sf"/>
</dbReference>
<dbReference type="InterPro" id="IPR036390">
    <property type="entry name" value="WH_DNA-bd_sf"/>
</dbReference>
<dbReference type="NCBIfam" id="NF003011">
    <property type="entry name" value="PRK03837.1"/>
    <property type="match status" value="1"/>
</dbReference>
<dbReference type="PANTHER" id="PTHR43537:SF53">
    <property type="entry name" value="HTH-TYPE TRANSCRIPTIONAL REPRESSOR NANR"/>
    <property type="match status" value="1"/>
</dbReference>
<dbReference type="PANTHER" id="PTHR43537">
    <property type="entry name" value="TRANSCRIPTIONAL REGULATOR, GNTR FAMILY"/>
    <property type="match status" value="1"/>
</dbReference>
<dbReference type="Pfam" id="PF07729">
    <property type="entry name" value="FCD"/>
    <property type="match status" value="1"/>
</dbReference>
<dbReference type="Pfam" id="PF00392">
    <property type="entry name" value="GntR"/>
    <property type="match status" value="1"/>
</dbReference>
<dbReference type="PRINTS" id="PR00035">
    <property type="entry name" value="HTHGNTR"/>
</dbReference>
<dbReference type="SMART" id="SM00895">
    <property type="entry name" value="FCD"/>
    <property type="match status" value="1"/>
</dbReference>
<dbReference type="SMART" id="SM00345">
    <property type="entry name" value="HTH_GNTR"/>
    <property type="match status" value="1"/>
</dbReference>
<dbReference type="SUPFAM" id="SSF48008">
    <property type="entry name" value="GntR ligand-binding domain-like"/>
    <property type="match status" value="1"/>
</dbReference>
<dbReference type="SUPFAM" id="SSF46785">
    <property type="entry name" value="Winged helix' DNA-binding domain"/>
    <property type="match status" value="1"/>
</dbReference>
<dbReference type="PROSITE" id="PS50949">
    <property type="entry name" value="HTH_GNTR"/>
    <property type="match status" value="1"/>
</dbReference>
<sequence length="263" mass="29803">MDVMNAFDSQAEDSPTSLGRSLRRRPLARKKLSEMVEEELEQMIRRHEFGEGEQLPSERELMAFFNVGRPSVREALAALKRKGLVQINNGERARVSRPSADTIISELSGMAKDFLTHPGGIAHFEQLRLFFESSLVRYAAEHATDEQIALLTKALEINSQSLDDNALFIRSDVEFHRVLAEIPGNPIFMAIHVALLDWLIAARPSVPDRELHEHNNVSYQQHIVIVDAIRQRDPDKADRALQTHLNSVSATWHALGKKSQKMR</sequence>
<keyword id="KW-0238">DNA-binding</keyword>
<keyword id="KW-0678">Repressor</keyword>
<keyword id="KW-0804">Transcription</keyword>
<keyword id="KW-0805">Transcription regulation</keyword>